<reference key="1">
    <citation type="submission" date="2007-05" db="EMBL/GenBank/DDBJ databases">
        <title>Complete sequence of Thermosipho melanesiensis BI429.</title>
        <authorList>
            <consortium name="US DOE Joint Genome Institute"/>
            <person name="Copeland A."/>
            <person name="Lucas S."/>
            <person name="Lapidus A."/>
            <person name="Barry K."/>
            <person name="Glavina del Rio T."/>
            <person name="Dalin E."/>
            <person name="Tice H."/>
            <person name="Pitluck S."/>
            <person name="Chertkov O."/>
            <person name="Brettin T."/>
            <person name="Bruce D."/>
            <person name="Detter J.C."/>
            <person name="Han C."/>
            <person name="Schmutz J."/>
            <person name="Larimer F."/>
            <person name="Land M."/>
            <person name="Hauser L."/>
            <person name="Kyrpides N."/>
            <person name="Mikhailova N."/>
            <person name="Nelson K."/>
            <person name="Gogarten J.P."/>
            <person name="Noll K."/>
            <person name="Richardson P."/>
        </authorList>
    </citation>
    <scope>NUCLEOTIDE SEQUENCE [LARGE SCALE GENOMIC DNA]</scope>
    <source>
        <strain>DSM 12029 / CIP 104789 / BI429</strain>
    </source>
</reference>
<evidence type="ECO:0000255" key="1">
    <source>
        <dbReference type="HAMAP-Rule" id="MF_00094"/>
    </source>
</evidence>
<comment type="function">
    <text evidence="1">Peptide chain release factor 2 directs the termination of translation in response to the peptide chain termination codons UGA and UAA.</text>
</comment>
<comment type="subcellular location">
    <subcellularLocation>
        <location evidence="1">Cytoplasm</location>
    </subcellularLocation>
</comment>
<comment type="PTM">
    <text evidence="1">Methylated by PrmC. Methylation increases the termination efficiency of RF2.</text>
</comment>
<comment type="similarity">
    <text evidence="1">Belongs to the prokaryotic/mitochondrial release factor family.</text>
</comment>
<feature type="chain" id="PRO_1000005018" description="Peptide chain release factor 2">
    <location>
        <begin position="1"/>
        <end position="369"/>
    </location>
</feature>
<feature type="modified residue" description="N5-methylglutamine" evidence="1">
    <location>
        <position position="249"/>
    </location>
</feature>
<sequence length="369" mass="43069">MIDYELKQRIDEVKKRYEDIVKVFHPEDKKKELEELEKLMGESDFWNDQKRAKEISQNAQRIRKIIDDMVDIENKLEDLEAGLELLEEDATFLDTIKQLIDDIERKVKTFELELILNEKFDSSNAYLSIHPGAGGTESQDWASMLLRMYMRWAERRGFDVQIVDYQPGEEAGIKSAMLYIKGEYVYGYLKYERGVHRLVRISPFDANKRRHTSFASVNVMPEIEDDIDVEINPEDLRIDTYRASGAGGQYVNKTESAVRITHIPTGIVVTCQTERSQLQNKETAMKVLKARLYQLELEKRQKQLEEIQGELKDISWGNQIRSYVFQPYTMVKDHRTNVETGNIDAVMDGDIDIFIESELIFFAKSKNKK</sequence>
<name>RF2_THEM4</name>
<gene>
    <name evidence="1" type="primary">prfB</name>
    <name type="ordered locus">Tmel_1549</name>
</gene>
<organism>
    <name type="scientific">Thermosipho melanesiensis (strain DSM 12029 / CIP 104789 / BI429)</name>
    <dbReference type="NCBI Taxonomy" id="391009"/>
    <lineage>
        <taxon>Bacteria</taxon>
        <taxon>Thermotogati</taxon>
        <taxon>Thermotogota</taxon>
        <taxon>Thermotogae</taxon>
        <taxon>Thermotogales</taxon>
        <taxon>Fervidobacteriaceae</taxon>
        <taxon>Thermosipho</taxon>
    </lineage>
</organism>
<accession>A6LN93</accession>
<dbReference type="EMBL" id="CP000716">
    <property type="protein sequence ID" value="ABR31394.1"/>
    <property type="molecule type" value="Genomic_DNA"/>
</dbReference>
<dbReference type="RefSeq" id="WP_012057753.1">
    <property type="nucleotide sequence ID" value="NC_009616.1"/>
</dbReference>
<dbReference type="SMR" id="A6LN93"/>
<dbReference type="STRING" id="391009.Tmel_1549"/>
<dbReference type="KEGG" id="tme:Tmel_1549"/>
<dbReference type="eggNOG" id="COG1186">
    <property type="taxonomic scope" value="Bacteria"/>
</dbReference>
<dbReference type="HOGENOM" id="CLU_036856_6_0_0"/>
<dbReference type="OrthoDB" id="9806673at2"/>
<dbReference type="Proteomes" id="UP000001110">
    <property type="component" value="Chromosome"/>
</dbReference>
<dbReference type="GO" id="GO:0005737">
    <property type="term" value="C:cytoplasm"/>
    <property type="evidence" value="ECO:0007669"/>
    <property type="project" value="UniProtKB-SubCell"/>
</dbReference>
<dbReference type="GO" id="GO:0016149">
    <property type="term" value="F:translation release factor activity, codon specific"/>
    <property type="evidence" value="ECO:0007669"/>
    <property type="project" value="UniProtKB-UniRule"/>
</dbReference>
<dbReference type="FunFam" id="3.30.160.20:FF:000010">
    <property type="entry name" value="Peptide chain release factor 2"/>
    <property type="match status" value="1"/>
</dbReference>
<dbReference type="Gene3D" id="3.30.160.20">
    <property type="match status" value="1"/>
</dbReference>
<dbReference type="Gene3D" id="3.30.70.1660">
    <property type="match status" value="1"/>
</dbReference>
<dbReference type="Gene3D" id="1.20.58.410">
    <property type="entry name" value="Release factor"/>
    <property type="match status" value="1"/>
</dbReference>
<dbReference type="HAMAP" id="MF_00094">
    <property type="entry name" value="Rel_fac_2"/>
    <property type="match status" value="1"/>
</dbReference>
<dbReference type="InterPro" id="IPR005139">
    <property type="entry name" value="PCRF"/>
</dbReference>
<dbReference type="InterPro" id="IPR000352">
    <property type="entry name" value="Pep_chain_release_fac_I"/>
</dbReference>
<dbReference type="InterPro" id="IPR045853">
    <property type="entry name" value="Pep_chain_release_fac_I_sf"/>
</dbReference>
<dbReference type="InterPro" id="IPR004374">
    <property type="entry name" value="PrfB"/>
</dbReference>
<dbReference type="NCBIfam" id="TIGR00020">
    <property type="entry name" value="prfB"/>
    <property type="match status" value="1"/>
</dbReference>
<dbReference type="PANTHER" id="PTHR43116:SF3">
    <property type="entry name" value="CLASS I PEPTIDE CHAIN RELEASE FACTOR"/>
    <property type="match status" value="1"/>
</dbReference>
<dbReference type="PANTHER" id="PTHR43116">
    <property type="entry name" value="PEPTIDE CHAIN RELEASE FACTOR 2"/>
    <property type="match status" value="1"/>
</dbReference>
<dbReference type="Pfam" id="PF03462">
    <property type="entry name" value="PCRF"/>
    <property type="match status" value="1"/>
</dbReference>
<dbReference type="Pfam" id="PF00472">
    <property type="entry name" value="RF-1"/>
    <property type="match status" value="1"/>
</dbReference>
<dbReference type="SMART" id="SM00937">
    <property type="entry name" value="PCRF"/>
    <property type="match status" value="1"/>
</dbReference>
<dbReference type="SUPFAM" id="SSF75620">
    <property type="entry name" value="Release factor"/>
    <property type="match status" value="1"/>
</dbReference>
<dbReference type="PROSITE" id="PS00745">
    <property type="entry name" value="RF_PROK_I"/>
    <property type="match status" value="1"/>
</dbReference>
<keyword id="KW-0963">Cytoplasm</keyword>
<keyword id="KW-0488">Methylation</keyword>
<keyword id="KW-0648">Protein biosynthesis</keyword>
<proteinExistence type="inferred from homology"/>
<protein>
    <recommendedName>
        <fullName evidence="1">Peptide chain release factor 2</fullName>
        <shortName evidence="1">RF-2</shortName>
    </recommendedName>
</protein>